<feature type="chain" id="PRO_0000353208" description="Serine/threonine-protein phosphatase 4 catalytic subunit">
    <location>
        <begin position="1"/>
        <end position="307"/>
    </location>
</feature>
<feature type="active site" description="Proton donor" evidence="1">
    <location>
        <position position="115"/>
    </location>
</feature>
<feature type="binding site" evidence="1">
    <location>
        <position position="54"/>
    </location>
    <ligand>
        <name>Mn(2+)</name>
        <dbReference type="ChEBI" id="CHEBI:29035"/>
        <label>1</label>
    </ligand>
</feature>
<feature type="binding site" evidence="1">
    <location>
        <position position="56"/>
    </location>
    <ligand>
        <name>Mn(2+)</name>
        <dbReference type="ChEBI" id="CHEBI:29035"/>
        <label>1</label>
    </ligand>
</feature>
<feature type="binding site" evidence="1">
    <location>
        <position position="82"/>
    </location>
    <ligand>
        <name>Mn(2+)</name>
        <dbReference type="ChEBI" id="CHEBI:29035"/>
        <label>1</label>
    </ligand>
</feature>
<feature type="binding site" evidence="1">
    <location>
        <position position="82"/>
    </location>
    <ligand>
        <name>Mn(2+)</name>
        <dbReference type="ChEBI" id="CHEBI:29035"/>
        <label>2</label>
    </ligand>
</feature>
<feature type="binding site" evidence="1">
    <location>
        <position position="114"/>
    </location>
    <ligand>
        <name>Mn(2+)</name>
        <dbReference type="ChEBI" id="CHEBI:29035"/>
        <label>2</label>
    </ligand>
</feature>
<feature type="binding site" evidence="1">
    <location>
        <position position="164"/>
    </location>
    <ligand>
        <name>Mn(2+)</name>
        <dbReference type="ChEBI" id="CHEBI:29035"/>
        <label>2</label>
    </ligand>
</feature>
<feature type="binding site" evidence="1">
    <location>
        <position position="238"/>
    </location>
    <ligand>
        <name>Mn(2+)</name>
        <dbReference type="ChEBI" id="CHEBI:29035"/>
        <label>2</label>
    </ligand>
</feature>
<feature type="modified residue" description="Leucine methyl ester" evidence="1">
    <location>
        <position position="307"/>
    </location>
</feature>
<accession>O76932</accession>
<accession>Q9VR98</accession>
<proteinExistence type="evidence at protein level"/>
<keyword id="KW-0963">Cytoplasm</keyword>
<keyword id="KW-0206">Cytoskeleton</keyword>
<keyword id="KW-0378">Hydrolase</keyword>
<keyword id="KW-0464">Manganese</keyword>
<keyword id="KW-0479">Metal-binding</keyword>
<keyword id="KW-0488">Methylation</keyword>
<keyword id="KW-0539">Nucleus</keyword>
<keyword id="KW-0904">Protein phosphatase</keyword>
<keyword id="KW-1185">Reference proteome</keyword>
<comment type="function">
    <text evidence="2 4">Protein phosphatase that regulates many processes such as microtubule organization at centrosomes. The probable PP4 complex Pp4-19C-PPP4R2r-flfl (PPP4C-PPP4R2-PPP4R3) is required to prevent caspase-induced cell death (in vitro).</text>
</comment>
<comment type="catalytic activity">
    <reaction>
        <text>O-phospho-L-seryl-[protein] + H2O = L-seryl-[protein] + phosphate</text>
        <dbReference type="Rhea" id="RHEA:20629"/>
        <dbReference type="Rhea" id="RHEA-COMP:9863"/>
        <dbReference type="Rhea" id="RHEA-COMP:11604"/>
        <dbReference type="ChEBI" id="CHEBI:15377"/>
        <dbReference type="ChEBI" id="CHEBI:29999"/>
        <dbReference type="ChEBI" id="CHEBI:43474"/>
        <dbReference type="ChEBI" id="CHEBI:83421"/>
        <dbReference type="EC" id="3.1.3.16"/>
    </reaction>
</comment>
<comment type="catalytic activity">
    <reaction>
        <text>O-phospho-L-threonyl-[protein] + H2O = L-threonyl-[protein] + phosphate</text>
        <dbReference type="Rhea" id="RHEA:47004"/>
        <dbReference type="Rhea" id="RHEA-COMP:11060"/>
        <dbReference type="Rhea" id="RHEA-COMP:11605"/>
        <dbReference type="ChEBI" id="CHEBI:15377"/>
        <dbReference type="ChEBI" id="CHEBI:30013"/>
        <dbReference type="ChEBI" id="CHEBI:43474"/>
        <dbReference type="ChEBI" id="CHEBI:61977"/>
        <dbReference type="EC" id="3.1.3.16"/>
    </reaction>
</comment>
<comment type="cofactor">
    <cofactor evidence="1">
        <name>Mn(2+)</name>
        <dbReference type="ChEBI" id="CHEBI:29035"/>
    </cofactor>
    <text evidence="1">Binds 2 manganese ions per subunit.</text>
</comment>
<comment type="subunit">
    <text evidence="1 3">Serine/threonine-protein phosphatase 4 (PP4) occurs in different assemblies of the catalytic and one or more regulatory subunits (By similarity). Probably part of a PP4 PPP4C-PPP4R2-PPP4R3 complex containing Pp4-19C, PPP4R2r and flfl. Interacts with Ptpa; thereby mediating basal localization of the Miranda (Mira) complex; probably by dephosphorylation of Mira (PubMed:26586222).</text>
</comment>
<comment type="subcellular location">
    <subcellularLocation>
        <location evidence="3 4">Cytoplasm</location>
    </subcellularLocation>
    <subcellularLocation>
        <location evidence="3 4">Nucleus</location>
    </subcellularLocation>
    <subcellularLocation>
        <location evidence="4">Cytoplasm</location>
        <location evidence="4">Cytoskeleton</location>
        <location evidence="4">Microtubule organizing center</location>
        <location evidence="4">Centrosome</location>
    </subcellularLocation>
    <text evidence="3">Localized predominantly to the cytoplasm during interphase. Exhibits a transient nuclear enrichment during early prophase. Cytoplasmic localization after breakdown of the nuclear envelope.</text>
</comment>
<comment type="PTM">
    <text evidence="1">Reversibly methyl esterified on Leu-307 by leucine carboxyl methyltransferase 1 (LCMT1) and protein phosphatase methylesterase 1 (PPME1). Carboxyl methylation influences the affinity of the catalytic subunit for the different regulatory subunits, thereby modulating the PP2A holoenzyme's substrate specificity, enzyme activity and cellular localization (By similarity).</text>
</comment>
<comment type="similarity">
    <text evidence="5">Belongs to the PPP phosphatase family. PP-4 (PP-X) subfamily.</text>
</comment>
<protein>
    <recommendedName>
        <fullName>Serine/threonine-protein phosphatase 4 catalytic subunit</fullName>
        <shortName>PP4C</shortName>
        <ecNumber>3.1.3.16</ecNumber>
    </recommendedName>
</protein>
<reference key="1">
    <citation type="journal article" date="1998" name="J. Cell Sci.">
        <title>Protein phosphatase 4 is an essential enzyme required for organisation of microtubules at centrosomes in Drosophila embryos.</title>
        <authorList>
            <person name="Helps N.R."/>
            <person name="Brewis N.D."/>
            <person name="Lineruth K."/>
            <person name="Davis T."/>
            <person name="Kaiser K."/>
            <person name="Cohen P.T.W."/>
        </authorList>
    </citation>
    <scope>NUCLEOTIDE SEQUENCE [GENOMIC DNA]</scope>
    <scope>FUNCTION</scope>
    <scope>SUBCELLULAR LOCATION</scope>
    <source>
        <strain>Oregon-R</strain>
    </source>
</reference>
<reference key="2">
    <citation type="journal article" date="2000" name="Science">
        <title>The genome sequence of Drosophila melanogaster.</title>
        <authorList>
            <person name="Adams M.D."/>
            <person name="Celniker S.E."/>
            <person name="Holt R.A."/>
            <person name="Evans C.A."/>
            <person name="Gocayne J.D."/>
            <person name="Amanatides P.G."/>
            <person name="Scherer S.E."/>
            <person name="Li P.W."/>
            <person name="Hoskins R.A."/>
            <person name="Galle R.F."/>
            <person name="George R.A."/>
            <person name="Lewis S.E."/>
            <person name="Richards S."/>
            <person name="Ashburner M."/>
            <person name="Henderson S.N."/>
            <person name="Sutton G.G."/>
            <person name="Wortman J.R."/>
            <person name="Yandell M.D."/>
            <person name="Zhang Q."/>
            <person name="Chen L.X."/>
            <person name="Brandon R.C."/>
            <person name="Rogers Y.-H.C."/>
            <person name="Blazej R.G."/>
            <person name="Champe M."/>
            <person name="Pfeiffer B.D."/>
            <person name="Wan K.H."/>
            <person name="Doyle C."/>
            <person name="Baxter E.G."/>
            <person name="Helt G."/>
            <person name="Nelson C.R."/>
            <person name="Miklos G.L.G."/>
            <person name="Abril J.F."/>
            <person name="Agbayani A."/>
            <person name="An H.-J."/>
            <person name="Andrews-Pfannkoch C."/>
            <person name="Baldwin D."/>
            <person name="Ballew R.M."/>
            <person name="Basu A."/>
            <person name="Baxendale J."/>
            <person name="Bayraktaroglu L."/>
            <person name="Beasley E.M."/>
            <person name="Beeson K.Y."/>
            <person name="Benos P.V."/>
            <person name="Berman B.P."/>
            <person name="Bhandari D."/>
            <person name="Bolshakov S."/>
            <person name="Borkova D."/>
            <person name="Botchan M.R."/>
            <person name="Bouck J."/>
            <person name="Brokstein P."/>
            <person name="Brottier P."/>
            <person name="Burtis K.C."/>
            <person name="Busam D.A."/>
            <person name="Butler H."/>
            <person name="Cadieu E."/>
            <person name="Center A."/>
            <person name="Chandra I."/>
            <person name="Cherry J.M."/>
            <person name="Cawley S."/>
            <person name="Dahlke C."/>
            <person name="Davenport L.B."/>
            <person name="Davies P."/>
            <person name="de Pablos B."/>
            <person name="Delcher A."/>
            <person name="Deng Z."/>
            <person name="Mays A.D."/>
            <person name="Dew I."/>
            <person name="Dietz S.M."/>
            <person name="Dodson K."/>
            <person name="Doup L.E."/>
            <person name="Downes M."/>
            <person name="Dugan-Rocha S."/>
            <person name="Dunkov B.C."/>
            <person name="Dunn P."/>
            <person name="Durbin K.J."/>
            <person name="Evangelista C.C."/>
            <person name="Ferraz C."/>
            <person name="Ferriera S."/>
            <person name="Fleischmann W."/>
            <person name="Fosler C."/>
            <person name="Gabrielian A.E."/>
            <person name="Garg N.S."/>
            <person name="Gelbart W.M."/>
            <person name="Glasser K."/>
            <person name="Glodek A."/>
            <person name="Gong F."/>
            <person name="Gorrell J.H."/>
            <person name="Gu Z."/>
            <person name="Guan P."/>
            <person name="Harris M."/>
            <person name="Harris N.L."/>
            <person name="Harvey D.A."/>
            <person name="Heiman T.J."/>
            <person name="Hernandez J.R."/>
            <person name="Houck J."/>
            <person name="Hostin D."/>
            <person name="Houston K.A."/>
            <person name="Howland T.J."/>
            <person name="Wei M.-H."/>
            <person name="Ibegwam C."/>
            <person name="Jalali M."/>
            <person name="Kalush F."/>
            <person name="Karpen G.H."/>
            <person name="Ke Z."/>
            <person name="Kennison J.A."/>
            <person name="Ketchum K.A."/>
            <person name="Kimmel B.E."/>
            <person name="Kodira C.D."/>
            <person name="Kraft C.L."/>
            <person name="Kravitz S."/>
            <person name="Kulp D."/>
            <person name="Lai Z."/>
            <person name="Lasko P."/>
            <person name="Lei Y."/>
            <person name="Levitsky A.A."/>
            <person name="Li J.H."/>
            <person name="Li Z."/>
            <person name="Liang Y."/>
            <person name="Lin X."/>
            <person name="Liu X."/>
            <person name="Mattei B."/>
            <person name="McIntosh T.C."/>
            <person name="McLeod M.P."/>
            <person name="McPherson D."/>
            <person name="Merkulov G."/>
            <person name="Milshina N.V."/>
            <person name="Mobarry C."/>
            <person name="Morris J."/>
            <person name="Moshrefi A."/>
            <person name="Mount S.M."/>
            <person name="Moy M."/>
            <person name="Murphy B."/>
            <person name="Murphy L."/>
            <person name="Muzny D.M."/>
            <person name="Nelson D.L."/>
            <person name="Nelson D.R."/>
            <person name="Nelson K.A."/>
            <person name="Nixon K."/>
            <person name="Nusskern D.R."/>
            <person name="Pacleb J.M."/>
            <person name="Palazzolo M."/>
            <person name="Pittman G.S."/>
            <person name="Pan S."/>
            <person name="Pollard J."/>
            <person name="Puri V."/>
            <person name="Reese M.G."/>
            <person name="Reinert K."/>
            <person name="Remington K."/>
            <person name="Saunders R.D.C."/>
            <person name="Scheeler F."/>
            <person name="Shen H."/>
            <person name="Shue B.C."/>
            <person name="Siden-Kiamos I."/>
            <person name="Simpson M."/>
            <person name="Skupski M.P."/>
            <person name="Smith T.J."/>
            <person name="Spier E."/>
            <person name="Spradling A.C."/>
            <person name="Stapleton M."/>
            <person name="Strong R."/>
            <person name="Sun E."/>
            <person name="Svirskas R."/>
            <person name="Tector C."/>
            <person name="Turner R."/>
            <person name="Venter E."/>
            <person name="Wang A.H."/>
            <person name="Wang X."/>
            <person name="Wang Z.-Y."/>
            <person name="Wassarman D.A."/>
            <person name="Weinstock G.M."/>
            <person name="Weissenbach J."/>
            <person name="Williams S.M."/>
            <person name="Woodage T."/>
            <person name="Worley K.C."/>
            <person name="Wu D."/>
            <person name="Yang S."/>
            <person name="Yao Q.A."/>
            <person name="Ye J."/>
            <person name="Yeh R.-F."/>
            <person name="Zaveri J.S."/>
            <person name="Zhan M."/>
            <person name="Zhang G."/>
            <person name="Zhao Q."/>
            <person name="Zheng L."/>
            <person name="Zheng X.H."/>
            <person name="Zhong F.N."/>
            <person name="Zhong W."/>
            <person name="Zhou X."/>
            <person name="Zhu S.C."/>
            <person name="Zhu X."/>
            <person name="Smith H.O."/>
            <person name="Gibbs R.A."/>
            <person name="Myers E.W."/>
            <person name="Rubin G.M."/>
            <person name="Venter J.C."/>
        </authorList>
    </citation>
    <scope>NUCLEOTIDE SEQUENCE [LARGE SCALE GENOMIC DNA]</scope>
    <source>
        <strain>Berkeley</strain>
    </source>
</reference>
<reference key="3">
    <citation type="journal article" date="2002" name="Genome Biol.">
        <title>Annotation of the Drosophila melanogaster euchromatic genome: a systematic review.</title>
        <authorList>
            <person name="Misra S."/>
            <person name="Crosby M.A."/>
            <person name="Mungall C.J."/>
            <person name="Matthews B.B."/>
            <person name="Campbell K.S."/>
            <person name="Hradecky P."/>
            <person name="Huang Y."/>
            <person name="Kaminker J.S."/>
            <person name="Millburn G.H."/>
            <person name="Prochnik S.E."/>
            <person name="Smith C.D."/>
            <person name="Tupy J.L."/>
            <person name="Whitfield E.J."/>
            <person name="Bayraktaroglu L."/>
            <person name="Berman B.P."/>
            <person name="Bettencourt B.R."/>
            <person name="Celniker S.E."/>
            <person name="de Grey A.D.N.J."/>
            <person name="Drysdale R.A."/>
            <person name="Harris N.L."/>
            <person name="Richter J."/>
            <person name="Russo S."/>
            <person name="Schroeder A.J."/>
            <person name="Shu S.Q."/>
            <person name="Stapleton M."/>
            <person name="Yamada C."/>
            <person name="Ashburner M."/>
            <person name="Gelbart W.M."/>
            <person name="Rubin G.M."/>
            <person name="Lewis S.E."/>
        </authorList>
    </citation>
    <scope>GENOME REANNOTATION</scope>
    <source>
        <strain>Berkeley</strain>
    </source>
</reference>
<reference key="4">
    <citation type="journal article" date="2002" name="Genome Biol.">
        <title>A Drosophila full-length cDNA resource.</title>
        <authorList>
            <person name="Stapleton M."/>
            <person name="Carlson J.W."/>
            <person name="Brokstein P."/>
            <person name="Yu C."/>
            <person name="Champe M."/>
            <person name="George R.A."/>
            <person name="Guarin H."/>
            <person name="Kronmiller B."/>
            <person name="Pacleb J.M."/>
            <person name="Park S."/>
            <person name="Wan K.H."/>
            <person name="Rubin G.M."/>
            <person name="Celniker S.E."/>
        </authorList>
    </citation>
    <scope>NUCLEOTIDE SEQUENCE [LARGE SCALE MRNA]</scope>
    <source>
        <strain>Berkeley</strain>
        <tissue>Embryo</tissue>
    </source>
</reference>
<reference key="5">
    <citation type="journal article" date="2008" name="Int. J. Biochem. Cell Biol.">
        <title>Depletion of protein phosphatase 4 in human cells reveals essential roles in centrosome maturation, cell migration and the regulation of Rho GTPases.</title>
        <authorList>
            <person name="Martin-Granados C."/>
            <person name="Philp A."/>
            <person name="Oxenham S.K."/>
            <person name="Prescott A.R."/>
            <person name="Cohen P.T.W."/>
        </authorList>
    </citation>
    <scope>PROBABLE COMPONENT OF A COMPLEX WITH PPP4R2R AND FLFL</scope>
    <scope>FUNCTION</scope>
</reference>
<reference key="6">
    <citation type="journal article" date="2016" name="Development">
        <title>Phosphotyrosyl phosphatase activator facilitates localization of Miranda through dephosphorylation in dividing neuroblasts.</title>
        <authorList>
            <person name="Zhang F."/>
            <person name="Huang Z.X."/>
            <person name="Bao H."/>
            <person name="Cong F."/>
            <person name="Wang H."/>
            <person name="Chai P.C."/>
            <person name="Xi Y."/>
            <person name="Ge W."/>
            <person name="Somers W.G."/>
            <person name="Yang Y."/>
            <person name="Cai Y."/>
            <person name="Yang X."/>
        </authorList>
    </citation>
    <scope>INTERACTION WITH PTPA</scope>
    <scope>SUBCELLULAR LOCATION</scope>
</reference>
<name>PP4C_DROME</name>
<dbReference type="EC" id="3.1.3.16"/>
<dbReference type="EMBL" id="Y14213">
    <property type="protein sequence ID" value="CAA74606.1"/>
    <property type="molecule type" value="Genomic_DNA"/>
</dbReference>
<dbReference type="EMBL" id="AE014298">
    <property type="protein sequence ID" value="AAF50905.1"/>
    <property type="molecule type" value="Genomic_DNA"/>
</dbReference>
<dbReference type="EMBL" id="AE014298">
    <property type="protein sequence ID" value="AAN09547.1"/>
    <property type="molecule type" value="Genomic_DNA"/>
</dbReference>
<dbReference type="EMBL" id="AY113503">
    <property type="protein sequence ID" value="AAM29508.1"/>
    <property type="molecule type" value="mRNA"/>
</dbReference>
<dbReference type="RefSeq" id="NP_001285489.1">
    <property type="nucleotide sequence ID" value="NM_001298560.1"/>
</dbReference>
<dbReference type="RefSeq" id="NP_001285490.1">
    <property type="nucleotide sequence ID" value="NM_001298561.1"/>
</dbReference>
<dbReference type="RefSeq" id="NP_001303570.1">
    <property type="nucleotide sequence ID" value="NM_001316641.1"/>
</dbReference>
<dbReference type="RefSeq" id="NP_524803.1">
    <property type="nucleotide sequence ID" value="NM_080064.3"/>
</dbReference>
<dbReference type="RefSeq" id="NP_728342.1">
    <property type="nucleotide sequence ID" value="NM_167703.4"/>
</dbReference>
<dbReference type="SMR" id="O76932"/>
<dbReference type="BioGRID" id="69445">
    <property type="interactions" value="17"/>
</dbReference>
<dbReference type="FunCoup" id="O76932">
    <property type="interactions" value="1783"/>
</dbReference>
<dbReference type="IntAct" id="O76932">
    <property type="interactions" value="13"/>
</dbReference>
<dbReference type="STRING" id="7227.FBpp0312200"/>
<dbReference type="PaxDb" id="7227-FBpp0077016"/>
<dbReference type="DNASU" id="45031"/>
<dbReference type="EnsemblMetazoa" id="FBtr0077324">
    <property type="protein sequence ID" value="FBpp0077016"/>
    <property type="gene ID" value="FBgn0023177"/>
</dbReference>
<dbReference type="EnsemblMetazoa" id="FBtr0077325">
    <property type="protein sequence ID" value="FBpp0077017"/>
    <property type="gene ID" value="FBgn0023177"/>
</dbReference>
<dbReference type="EnsemblMetazoa" id="FBtr0345017">
    <property type="protein sequence ID" value="FBpp0311268"/>
    <property type="gene ID" value="FBgn0023177"/>
</dbReference>
<dbReference type="EnsemblMetazoa" id="FBtr0346620">
    <property type="protein sequence ID" value="FBpp0312200"/>
    <property type="gene ID" value="FBgn0023177"/>
</dbReference>
<dbReference type="EnsemblMetazoa" id="FBtr0445386">
    <property type="protein sequence ID" value="FBpp0401522"/>
    <property type="gene ID" value="FBgn0023177"/>
</dbReference>
<dbReference type="GeneID" id="45031"/>
<dbReference type="KEGG" id="dme:Dmel_CG32505"/>
<dbReference type="AGR" id="FB:FBgn0023177"/>
<dbReference type="CTD" id="45031"/>
<dbReference type="FlyBase" id="FBgn0023177">
    <property type="gene designation" value="Pp4-19C"/>
</dbReference>
<dbReference type="VEuPathDB" id="VectorBase:FBgn0023177"/>
<dbReference type="eggNOG" id="KOG0372">
    <property type="taxonomic scope" value="Eukaryota"/>
</dbReference>
<dbReference type="HOGENOM" id="CLU_004962_8_1_1"/>
<dbReference type="InParanoid" id="O76932"/>
<dbReference type="OMA" id="QSTMPID"/>
<dbReference type="OrthoDB" id="1930084at2759"/>
<dbReference type="PhylomeDB" id="O76932"/>
<dbReference type="Reactome" id="R-DME-5693607">
    <property type="pathway name" value="Processing of DNA double-strand break ends"/>
</dbReference>
<dbReference type="SignaLink" id="O76932"/>
<dbReference type="BioGRID-ORCS" id="45031">
    <property type="hits" value="1 hit in 3 CRISPR screens"/>
</dbReference>
<dbReference type="CD-CODE" id="2838EF58">
    <property type="entry name" value="Centrosome"/>
</dbReference>
<dbReference type="GenomeRNAi" id="45031"/>
<dbReference type="PRO" id="PR:O76932"/>
<dbReference type="Proteomes" id="UP000000803">
    <property type="component" value="Chromosome X"/>
</dbReference>
<dbReference type="Bgee" id="FBgn0023177">
    <property type="expression patterns" value="Expressed in secondary oocyte and 141 other cell types or tissues"/>
</dbReference>
<dbReference type="ExpressionAtlas" id="O76932">
    <property type="expression patterns" value="baseline and differential"/>
</dbReference>
<dbReference type="GO" id="GO:0005813">
    <property type="term" value="C:centrosome"/>
    <property type="evidence" value="ECO:0000314"/>
    <property type="project" value="FlyBase"/>
</dbReference>
<dbReference type="GO" id="GO:0000775">
    <property type="term" value="C:chromosome, centromeric region"/>
    <property type="evidence" value="ECO:0000353"/>
    <property type="project" value="FlyBase"/>
</dbReference>
<dbReference type="GO" id="GO:0005737">
    <property type="term" value="C:cytoplasm"/>
    <property type="evidence" value="ECO:0000314"/>
    <property type="project" value="FlyBase"/>
</dbReference>
<dbReference type="GO" id="GO:0005634">
    <property type="term" value="C:nucleus"/>
    <property type="evidence" value="ECO:0000314"/>
    <property type="project" value="FlyBase"/>
</dbReference>
<dbReference type="GO" id="GO:0030289">
    <property type="term" value="C:protein phosphatase 4 complex"/>
    <property type="evidence" value="ECO:0000314"/>
    <property type="project" value="FlyBase"/>
</dbReference>
<dbReference type="GO" id="GO:0046872">
    <property type="term" value="F:metal ion binding"/>
    <property type="evidence" value="ECO:0007669"/>
    <property type="project" value="UniProtKB-KW"/>
</dbReference>
<dbReference type="GO" id="GO:0004722">
    <property type="term" value="F:protein serine/threonine phosphatase activity"/>
    <property type="evidence" value="ECO:0000315"/>
    <property type="project" value="FlyBase"/>
</dbReference>
<dbReference type="GO" id="GO:0000724">
    <property type="term" value="P:double-strand break repair via homologous recombination"/>
    <property type="evidence" value="ECO:0000318"/>
    <property type="project" value="GO_Central"/>
</dbReference>
<dbReference type="GO" id="GO:0007017">
    <property type="term" value="P:microtubule-based process"/>
    <property type="evidence" value="ECO:0000315"/>
    <property type="project" value="FlyBase"/>
</dbReference>
<dbReference type="GO" id="GO:0000278">
    <property type="term" value="P:mitotic cell cycle"/>
    <property type="evidence" value="ECO:0000315"/>
    <property type="project" value="FlyBase"/>
</dbReference>
<dbReference type="GO" id="GO:0061060">
    <property type="term" value="P:negative regulation of peptidoglycan recognition protein signaling pathway"/>
    <property type="evidence" value="ECO:0000315"/>
    <property type="project" value="FlyBase"/>
</dbReference>
<dbReference type="GO" id="GO:0045879">
    <property type="term" value="P:negative regulation of smoothened signaling pathway"/>
    <property type="evidence" value="ECO:0000315"/>
    <property type="project" value="FlyBase"/>
</dbReference>
<dbReference type="GO" id="GO:0007346">
    <property type="term" value="P:regulation of mitotic cell cycle"/>
    <property type="evidence" value="ECO:0000315"/>
    <property type="project" value="FlyBase"/>
</dbReference>
<dbReference type="CDD" id="cd07415">
    <property type="entry name" value="MPP_PP2A_PP4_PP6"/>
    <property type="match status" value="1"/>
</dbReference>
<dbReference type="FunFam" id="3.60.21.10:FF:000010">
    <property type="entry name" value="Serine/threonine-protein phosphatase"/>
    <property type="match status" value="1"/>
</dbReference>
<dbReference type="Gene3D" id="3.60.21.10">
    <property type="match status" value="1"/>
</dbReference>
<dbReference type="InterPro" id="IPR004843">
    <property type="entry name" value="Calcineurin-like_PHP_ApaH"/>
</dbReference>
<dbReference type="InterPro" id="IPR029052">
    <property type="entry name" value="Metallo-depent_PP-like"/>
</dbReference>
<dbReference type="InterPro" id="IPR047129">
    <property type="entry name" value="PPA2-like"/>
</dbReference>
<dbReference type="InterPro" id="IPR006186">
    <property type="entry name" value="Ser/Thr-sp_prot-phosphatase"/>
</dbReference>
<dbReference type="PANTHER" id="PTHR45619">
    <property type="entry name" value="SERINE/THREONINE-PROTEIN PHOSPHATASE PP2A-RELATED"/>
    <property type="match status" value="1"/>
</dbReference>
<dbReference type="Pfam" id="PF00149">
    <property type="entry name" value="Metallophos"/>
    <property type="match status" value="1"/>
</dbReference>
<dbReference type="PRINTS" id="PR00114">
    <property type="entry name" value="STPHPHTASE"/>
</dbReference>
<dbReference type="SMART" id="SM00156">
    <property type="entry name" value="PP2Ac"/>
    <property type="match status" value="1"/>
</dbReference>
<dbReference type="SUPFAM" id="SSF56300">
    <property type="entry name" value="Metallo-dependent phosphatases"/>
    <property type="match status" value="1"/>
</dbReference>
<dbReference type="PROSITE" id="PS00125">
    <property type="entry name" value="SER_THR_PHOSPHATASE"/>
    <property type="match status" value="1"/>
</dbReference>
<gene>
    <name type="primary">Pp4-19C</name>
    <name type="synonym">pp4</name>
    <name type="ORF">CG32505</name>
</gene>
<organism>
    <name type="scientific">Drosophila melanogaster</name>
    <name type="common">Fruit fly</name>
    <dbReference type="NCBI Taxonomy" id="7227"/>
    <lineage>
        <taxon>Eukaryota</taxon>
        <taxon>Metazoa</taxon>
        <taxon>Ecdysozoa</taxon>
        <taxon>Arthropoda</taxon>
        <taxon>Hexapoda</taxon>
        <taxon>Insecta</taxon>
        <taxon>Pterygota</taxon>
        <taxon>Neoptera</taxon>
        <taxon>Endopterygota</taxon>
        <taxon>Diptera</taxon>
        <taxon>Brachycera</taxon>
        <taxon>Muscomorpha</taxon>
        <taxon>Ephydroidea</taxon>
        <taxon>Drosophilidae</taxon>
        <taxon>Drosophila</taxon>
        <taxon>Sophophora</taxon>
    </lineage>
</organism>
<evidence type="ECO:0000250" key="1"/>
<evidence type="ECO:0000269" key="2">
    <source>
    </source>
</evidence>
<evidence type="ECO:0000269" key="3">
    <source>
    </source>
</evidence>
<evidence type="ECO:0000269" key="4">
    <source>
    </source>
</evidence>
<evidence type="ECO:0000305" key="5"/>
<sequence length="307" mass="35341">MSDYSDLDRQIEQLKRCEIIKENEVKALCAKAREILVEEGNVQRVDSPVTVCGDIHGQFYDLKELFKVGGDVPEKNYLFMGDFVDRGYYSVETFLLLLALKVRYPDRITLIRGNHESRQITQVYGFYDECLRKYGSTAVWRYCTEIFDYLSLSAIIDGKIFCVHGGLSPSIQYLDQIRSIDRKQEVPHDGPMCDLLWSDPEDQTGWGVSPRGAGYLFGSDVVSQFNRTNDIDMICRAHQLVMEGFKWHFNETVLTVWSAPNYCYRCGNVAAILELNEYLHRDFVIFEAAPQESRGIPSKKPQADYFL</sequence>